<evidence type="ECO:0000255" key="1">
    <source>
        <dbReference type="HAMAP-Rule" id="MF_00200"/>
    </source>
</evidence>
<protein>
    <recommendedName>
        <fullName evidence="1">RNA 3'-terminal phosphate cyclase</fullName>
        <shortName evidence="1">RNA cyclase</shortName>
        <shortName evidence="1">RNA-3'-phosphate cyclase</shortName>
        <ecNumber evidence="1">6.5.1.4</ecNumber>
    </recommendedName>
</protein>
<reference key="1">
    <citation type="journal article" date="2009" name="Appl. Environ. Microbiol.">
        <title>Metabolic versatility and indigenous origin of the archaeon Thermococcus sibiricus, isolated from a siberian oil reservoir, as revealed by genome analysis.</title>
        <authorList>
            <person name="Mardanov A.V."/>
            <person name="Ravin N.V."/>
            <person name="Svetlitchnyi V.A."/>
            <person name="Beletsky A.V."/>
            <person name="Miroshnichenko M.L."/>
            <person name="Bonch-Osmolovskaya E.A."/>
            <person name="Skryabin K.G."/>
        </authorList>
    </citation>
    <scope>NUCLEOTIDE SEQUENCE [LARGE SCALE GENOMIC DNA]</scope>
    <source>
        <strain>DSM 12597 / MM 739</strain>
    </source>
</reference>
<feature type="chain" id="PRO_1000204099" description="RNA 3'-terminal phosphate cyclase">
    <location>
        <begin position="1"/>
        <end position="350"/>
    </location>
</feature>
<feature type="active site" description="Tele-AMP-histidine intermediate" evidence="1">
    <location>
        <position position="314"/>
    </location>
</feature>
<feature type="binding site" evidence="1">
    <location>
        <position position="100"/>
    </location>
    <ligand>
        <name>ATP</name>
        <dbReference type="ChEBI" id="CHEBI:30616"/>
    </ligand>
</feature>
<feature type="binding site" evidence="1">
    <location>
        <begin position="290"/>
        <end position="294"/>
    </location>
    <ligand>
        <name>ATP</name>
        <dbReference type="ChEBI" id="CHEBI:30616"/>
    </ligand>
</feature>
<dbReference type="EC" id="6.5.1.4" evidence="1"/>
<dbReference type="EMBL" id="CP001463">
    <property type="protein sequence ID" value="ACS90579.1"/>
    <property type="molecule type" value="Genomic_DNA"/>
</dbReference>
<dbReference type="RefSeq" id="WP_015849796.1">
    <property type="nucleotide sequence ID" value="NC_012883.1"/>
</dbReference>
<dbReference type="SMR" id="C6A4N4"/>
<dbReference type="STRING" id="604354.TSIB_1528"/>
<dbReference type="GeneID" id="8096536"/>
<dbReference type="KEGG" id="tsi:TSIB_1528"/>
<dbReference type="eggNOG" id="arCOG04125">
    <property type="taxonomic scope" value="Archaea"/>
</dbReference>
<dbReference type="HOGENOM" id="CLU_027882_0_0_2"/>
<dbReference type="OrthoDB" id="7994at2157"/>
<dbReference type="Proteomes" id="UP000009079">
    <property type="component" value="Chromosome"/>
</dbReference>
<dbReference type="GO" id="GO:0005737">
    <property type="term" value="C:cytoplasm"/>
    <property type="evidence" value="ECO:0007669"/>
    <property type="project" value="UniProtKB-SubCell"/>
</dbReference>
<dbReference type="GO" id="GO:0005524">
    <property type="term" value="F:ATP binding"/>
    <property type="evidence" value="ECO:0007669"/>
    <property type="project" value="UniProtKB-KW"/>
</dbReference>
<dbReference type="GO" id="GO:0003963">
    <property type="term" value="F:RNA-3'-phosphate cyclase activity"/>
    <property type="evidence" value="ECO:0007669"/>
    <property type="project" value="UniProtKB-UniRule"/>
</dbReference>
<dbReference type="GO" id="GO:0006396">
    <property type="term" value="P:RNA processing"/>
    <property type="evidence" value="ECO:0007669"/>
    <property type="project" value="InterPro"/>
</dbReference>
<dbReference type="CDD" id="cd00874">
    <property type="entry name" value="RNA_Cyclase_Class_II"/>
    <property type="match status" value="1"/>
</dbReference>
<dbReference type="FunFam" id="3.30.360.20:FF:000002">
    <property type="entry name" value="RNA terminal phosphate cyclase-like 1"/>
    <property type="match status" value="1"/>
</dbReference>
<dbReference type="Gene3D" id="3.65.10.20">
    <property type="entry name" value="RNA 3'-terminal phosphate cyclase domain"/>
    <property type="match status" value="1"/>
</dbReference>
<dbReference type="Gene3D" id="3.30.360.20">
    <property type="entry name" value="RNA 3'-terminal phosphate cyclase, insert domain"/>
    <property type="match status" value="1"/>
</dbReference>
<dbReference type="HAMAP" id="MF_00200">
    <property type="entry name" value="RTC"/>
    <property type="match status" value="1"/>
</dbReference>
<dbReference type="InterPro" id="IPR013791">
    <property type="entry name" value="RNA3'-term_phos_cycl_insert"/>
</dbReference>
<dbReference type="InterPro" id="IPR023797">
    <property type="entry name" value="RNA3'_phos_cyclase_dom"/>
</dbReference>
<dbReference type="InterPro" id="IPR037136">
    <property type="entry name" value="RNA3'_phos_cyclase_dom_sf"/>
</dbReference>
<dbReference type="InterPro" id="IPR000228">
    <property type="entry name" value="RNA3'_term_phos_cyc"/>
</dbReference>
<dbReference type="InterPro" id="IPR017770">
    <property type="entry name" value="RNA3'_term_phos_cyc_type_1"/>
</dbReference>
<dbReference type="InterPro" id="IPR020719">
    <property type="entry name" value="RNA3'_term_phos_cycl-like_CS"/>
</dbReference>
<dbReference type="InterPro" id="IPR013792">
    <property type="entry name" value="RNA3'P_cycl/enolpyr_Trfase_a/b"/>
</dbReference>
<dbReference type="InterPro" id="IPR036553">
    <property type="entry name" value="RPTC_insert"/>
</dbReference>
<dbReference type="NCBIfam" id="TIGR03399">
    <property type="entry name" value="RNA_3prim_cycl"/>
    <property type="match status" value="1"/>
</dbReference>
<dbReference type="PANTHER" id="PTHR11096">
    <property type="entry name" value="RNA 3' TERMINAL PHOSPHATE CYCLASE"/>
    <property type="match status" value="1"/>
</dbReference>
<dbReference type="PANTHER" id="PTHR11096:SF0">
    <property type="entry name" value="RNA 3'-TERMINAL PHOSPHATE CYCLASE"/>
    <property type="match status" value="1"/>
</dbReference>
<dbReference type="Pfam" id="PF01137">
    <property type="entry name" value="RTC"/>
    <property type="match status" value="1"/>
</dbReference>
<dbReference type="Pfam" id="PF05189">
    <property type="entry name" value="RTC_insert"/>
    <property type="match status" value="1"/>
</dbReference>
<dbReference type="PIRSF" id="PIRSF005378">
    <property type="entry name" value="RNA3'_term_phos_cycl_euk"/>
    <property type="match status" value="1"/>
</dbReference>
<dbReference type="SUPFAM" id="SSF55205">
    <property type="entry name" value="EPT/RTPC-like"/>
    <property type="match status" value="1"/>
</dbReference>
<dbReference type="PROSITE" id="PS01287">
    <property type="entry name" value="RTC"/>
    <property type="match status" value="1"/>
</dbReference>
<organism>
    <name type="scientific">Thermococcus sibiricus (strain DSM 12597 / MM 739)</name>
    <dbReference type="NCBI Taxonomy" id="604354"/>
    <lineage>
        <taxon>Archaea</taxon>
        <taxon>Methanobacteriati</taxon>
        <taxon>Methanobacteriota</taxon>
        <taxon>Thermococci</taxon>
        <taxon>Thermococcales</taxon>
        <taxon>Thermococcaceae</taxon>
        <taxon>Thermococcus</taxon>
    </lineage>
</organism>
<sequence length="350" mass="38601">MRVIDGSYGEGGGQILRTAVALSVITGEPIKIINIRAKRSNPGLRPQHLHGILALKELSDAKVKGAKEGSTELEFYPKSTRVRHVKVLIKTAGSISLVLQALLPAMVFAEEEVTFEITGGTDVAWSPPVDYLKHITLYALEKLGIKVEIEIRRRGHYPRGGGFVIGKVYPWGTKRPLVARTFDKIYSFEGISHAVRLPSHVAIRQAKAAKEALERVYPSIPIKIHEEYYEQGKDPHFGPGSGIVIWANTDVLRLGGDALGERGKPAEIVGREAAKALIEQLGPRHAVDKFLGDQLIPFLTFAGGDIWVSEVTKHLITNVWVVEQFFGRVFEMEGEIGKPGKVRVVKKVEL</sequence>
<keyword id="KW-0067">ATP-binding</keyword>
<keyword id="KW-0963">Cytoplasm</keyword>
<keyword id="KW-0436">Ligase</keyword>
<keyword id="KW-0547">Nucleotide-binding</keyword>
<keyword id="KW-1185">Reference proteome</keyword>
<accession>C6A4N4</accession>
<name>RTCA_THESM</name>
<proteinExistence type="inferred from homology"/>
<gene>
    <name evidence="1" type="primary">rtcA</name>
    <name type="ordered locus">TSIB_1528</name>
</gene>
<comment type="function">
    <text evidence="1">Catalyzes the conversion of 3'-phosphate to a 2',3'-cyclic phosphodiester at the end of RNA. The mechanism of action of the enzyme occurs in 3 steps: (A) adenylation of the enzyme by ATP; (B) transfer of adenylate to an RNA-N3'P to produce RNA-N3'PP5'A; (C) and attack of the adjacent 2'-hydroxyl on the 3'-phosphorus in the diester linkage to produce the cyclic end product. The biological role of this enzyme is unknown but it is likely to function in some aspects of cellular RNA processing.</text>
</comment>
<comment type="catalytic activity">
    <reaction evidence="1">
        <text>a 3'-end 3'-phospho-ribonucleotide-RNA + ATP = a 3'-end 2',3'-cyclophospho-ribonucleotide-RNA + AMP + diphosphate</text>
        <dbReference type="Rhea" id="RHEA:23976"/>
        <dbReference type="Rhea" id="RHEA-COMP:10463"/>
        <dbReference type="Rhea" id="RHEA-COMP:10464"/>
        <dbReference type="ChEBI" id="CHEBI:30616"/>
        <dbReference type="ChEBI" id="CHEBI:33019"/>
        <dbReference type="ChEBI" id="CHEBI:83062"/>
        <dbReference type="ChEBI" id="CHEBI:83064"/>
        <dbReference type="ChEBI" id="CHEBI:456215"/>
        <dbReference type="EC" id="6.5.1.4"/>
    </reaction>
</comment>
<comment type="subcellular location">
    <subcellularLocation>
        <location evidence="1">Cytoplasm</location>
    </subcellularLocation>
</comment>
<comment type="similarity">
    <text evidence="1">Belongs to the RNA 3'-terminal cyclase family. Type 1 subfamily.</text>
</comment>